<feature type="chain" id="PRO_0000204910" description="Nucleoporin POM152">
    <location>
        <begin position="1"/>
        <end position="1337"/>
    </location>
</feature>
<feature type="topological domain" description="Cytoplasmic" evidence="12 14">
    <location>
        <begin position="1"/>
        <end position="110"/>
    </location>
</feature>
<feature type="transmembrane region" description="Helical" evidence="1">
    <location>
        <begin position="111"/>
        <end position="131"/>
    </location>
</feature>
<feature type="topological domain" description="Perinuclear space" evidence="12 14">
    <location>
        <begin position="132"/>
        <end position="148"/>
    </location>
</feature>
<feature type="transmembrane region" description="Helical" evidence="1">
    <location>
        <begin position="149"/>
        <end position="169"/>
    </location>
</feature>
<feature type="topological domain" description="Cytoplasmic" evidence="12 14">
    <location>
        <begin position="170"/>
        <end position="172"/>
    </location>
</feature>
<feature type="transmembrane region" description="Helical" evidence="1">
    <location>
        <begin position="173"/>
        <end position="193"/>
    </location>
</feature>
<feature type="topological domain" description="Perinuclear space" evidence="7 14">
    <location>
        <begin position="194"/>
        <end position="1337"/>
    </location>
</feature>
<feature type="repeat" description="1" evidence="8">
    <location>
        <begin position="390"/>
        <end position="413"/>
    </location>
</feature>
<feature type="repeat" description="2" evidence="8">
    <location>
        <begin position="626"/>
        <end position="650"/>
    </location>
</feature>
<feature type="repeat" description="3" evidence="8">
    <location>
        <begin position="732"/>
        <end position="755"/>
    </location>
</feature>
<feature type="repeat" description="4" evidence="8">
    <location>
        <begin position="836"/>
        <end position="859"/>
    </location>
</feature>
<feature type="repeat" description="5" evidence="8">
    <location>
        <begin position="943"/>
        <end position="966"/>
    </location>
</feature>
<feature type="repeat" description="6" evidence="8">
    <location>
        <begin position="1058"/>
        <end position="1077"/>
    </location>
</feature>
<feature type="repeat" description="7" evidence="8">
    <location>
        <begin position="1157"/>
        <end position="1178"/>
    </location>
</feature>
<feature type="repeat" description="8" evidence="8">
    <location>
        <begin position="1253"/>
        <end position="1276"/>
    </location>
</feature>
<feature type="region of interest" description="Pore side" evidence="11">
    <location>
        <begin position="1"/>
        <end position="175"/>
    </location>
</feature>
<feature type="region of interest" description="Disordered" evidence="2">
    <location>
        <begin position="1"/>
        <end position="48"/>
    </location>
</feature>
<feature type="region of interest" description="Cisternal side" evidence="11">
    <location>
        <begin position="196"/>
        <end position="1337"/>
    </location>
</feature>
<feature type="region of interest" description="8 X 24 AA approximate repeats">
    <location>
        <begin position="390"/>
        <end position="1276"/>
    </location>
</feature>
<feature type="compositionally biased region" description="Low complexity" evidence="2">
    <location>
        <begin position="19"/>
        <end position="37"/>
    </location>
</feature>
<feature type="modified residue" description="Phosphoserine" evidence="16 17">
    <location>
        <position position="45"/>
    </location>
</feature>
<feature type="modified residue" description="Phosphoserine" evidence="15">
    <location>
        <position position="60"/>
    </location>
</feature>
<feature type="glycosylation site" description="N-linked (GlcNAc...) asparagine" evidence="13">
    <location>
        <position position="280"/>
    </location>
</feature>
<feature type="strand" evidence="18">
    <location>
        <begin position="722"/>
        <end position="726"/>
    </location>
</feature>
<feature type="strand" evidence="18">
    <location>
        <begin position="729"/>
        <end position="733"/>
    </location>
</feature>
<feature type="strand" evidence="18">
    <location>
        <begin position="737"/>
        <end position="746"/>
    </location>
</feature>
<feature type="strand" evidence="18">
    <location>
        <begin position="748"/>
        <end position="763"/>
    </location>
</feature>
<feature type="strand" evidence="18">
    <location>
        <begin position="766"/>
        <end position="773"/>
    </location>
</feature>
<feature type="strand" evidence="18">
    <location>
        <begin position="776"/>
        <end position="787"/>
    </location>
</feature>
<feature type="strand" evidence="18">
    <location>
        <begin position="790"/>
        <end position="800"/>
    </location>
</feature>
<feature type="turn" evidence="18">
    <location>
        <begin position="801"/>
        <end position="803"/>
    </location>
</feature>
<feature type="strand" evidence="18">
    <location>
        <begin position="804"/>
        <end position="807"/>
    </location>
</feature>
<feature type="strand" evidence="18">
    <location>
        <begin position="813"/>
        <end position="817"/>
    </location>
</feature>
<keyword id="KW-0002">3D-structure</keyword>
<keyword id="KW-0903">Direct protein sequencing</keyword>
<keyword id="KW-0325">Glycoprotein</keyword>
<keyword id="KW-0472">Membrane</keyword>
<keyword id="KW-0509">mRNA transport</keyword>
<keyword id="KW-0906">Nuclear pore complex</keyword>
<keyword id="KW-0539">Nucleus</keyword>
<keyword id="KW-0597">Phosphoprotein</keyword>
<keyword id="KW-0653">Protein transport</keyword>
<keyword id="KW-1185">Reference proteome</keyword>
<keyword id="KW-0677">Repeat</keyword>
<keyword id="KW-0811">Translocation</keyword>
<keyword id="KW-0812">Transmembrane</keyword>
<keyword id="KW-1133">Transmembrane helix</keyword>
<keyword id="KW-0813">Transport</keyword>
<evidence type="ECO:0000255" key="1"/>
<evidence type="ECO:0000256" key="2">
    <source>
        <dbReference type="SAM" id="MobiDB-lite"/>
    </source>
</evidence>
<evidence type="ECO:0000269" key="3">
    <source>
    </source>
</evidence>
<evidence type="ECO:0000269" key="4">
    <source>
    </source>
</evidence>
<evidence type="ECO:0000269" key="5">
    <source>
    </source>
</evidence>
<evidence type="ECO:0000269" key="6">
    <source>
    </source>
</evidence>
<evidence type="ECO:0000269" key="7">
    <source>
    </source>
</evidence>
<evidence type="ECO:0000269" key="8">
    <source>
    </source>
</evidence>
<evidence type="ECO:0000269" key="9">
    <source>
    </source>
</evidence>
<evidence type="ECO:0000269" key="10">
    <source>
    </source>
</evidence>
<evidence type="ECO:0000305" key="11"/>
<evidence type="ECO:0000305" key="12">
    <source>
    </source>
</evidence>
<evidence type="ECO:0000305" key="13">
    <source>
    </source>
</evidence>
<evidence type="ECO:0000305" key="14">
    <source>
    </source>
</evidence>
<evidence type="ECO:0007744" key="15">
    <source>
    </source>
</evidence>
<evidence type="ECO:0007744" key="16">
    <source>
    </source>
</evidence>
<evidence type="ECO:0007744" key="17">
    <source>
    </source>
</evidence>
<evidence type="ECO:0007829" key="18">
    <source>
        <dbReference type="PDB" id="5TVZ"/>
    </source>
</evidence>
<reference key="1">
    <citation type="journal article" date="1994" name="J. Cell Biol.">
        <title>POM152 is an integral protein of the pore membrane domain of the yeast nuclear envelope.</title>
        <authorList>
            <person name="Wozniak R.W."/>
            <person name="Blobel G."/>
            <person name="Rout M.P."/>
        </authorList>
    </citation>
    <scope>NUCLEOTIDE SEQUENCE [GENOMIC DNA]</scope>
    <scope>PARTIAL PROTEIN SEQUENCE</scope>
    <scope>GLYCOSYLATION</scope>
    <scope>REPEATS</scope>
    <source>
        <strain>ATCC 200060 / W303</strain>
    </source>
</reference>
<reference key="2">
    <citation type="journal article" date="1997" name="Nature">
        <title>The nucleotide sequence of Saccharomyces cerevisiae chromosome XIII.</title>
        <authorList>
            <person name="Bowman S."/>
            <person name="Churcher C.M."/>
            <person name="Badcock K."/>
            <person name="Brown D."/>
            <person name="Chillingworth T."/>
            <person name="Connor R."/>
            <person name="Dedman K."/>
            <person name="Devlin K."/>
            <person name="Gentles S."/>
            <person name="Hamlin N."/>
            <person name="Hunt S."/>
            <person name="Jagels K."/>
            <person name="Lye G."/>
            <person name="Moule S."/>
            <person name="Odell C."/>
            <person name="Pearson D."/>
            <person name="Rajandream M.A."/>
            <person name="Rice P."/>
            <person name="Skelton J."/>
            <person name="Walsh S.V."/>
            <person name="Whitehead S."/>
            <person name="Barrell B.G."/>
        </authorList>
    </citation>
    <scope>NUCLEOTIDE SEQUENCE [LARGE SCALE GENOMIC DNA]</scope>
    <source>
        <strain>ATCC 204508 / S288c</strain>
    </source>
</reference>
<reference key="3">
    <citation type="journal article" date="2014" name="G3 (Bethesda)">
        <title>The reference genome sequence of Saccharomyces cerevisiae: Then and now.</title>
        <authorList>
            <person name="Engel S.R."/>
            <person name="Dietrich F.S."/>
            <person name="Fisk D.G."/>
            <person name="Binkley G."/>
            <person name="Balakrishnan R."/>
            <person name="Costanzo M.C."/>
            <person name="Dwight S.S."/>
            <person name="Hitz B.C."/>
            <person name="Karra K."/>
            <person name="Nash R.S."/>
            <person name="Weng S."/>
            <person name="Wong E.D."/>
            <person name="Lloyd P."/>
            <person name="Skrzypek M.S."/>
            <person name="Miyasato S.R."/>
            <person name="Simison M."/>
            <person name="Cherry J.M."/>
        </authorList>
    </citation>
    <scope>GENOME REANNOTATION</scope>
    <source>
        <strain>ATCC 204508 / S288c</strain>
    </source>
</reference>
<reference key="4">
    <citation type="journal article" date="1996" name="J. Cell Biol.">
        <title>The yeast nucleoporin Nup188p interacts genetically and physically with the core structures of the nuclear pore complex.</title>
        <authorList>
            <person name="Nehrbass U."/>
            <person name="Rout M.P."/>
            <person name="Maguire S."/>
            <person name="Blobel G."/>
            <person name="Wozniak R.W."/>
        </authorList>
    </citation>
    <scope>FUNCTION</scope>
    <scope>INTERACTION WITH NUP188</scope>
</reference>
<reference key="5">
    <citation type="journal article" date="1999" name="J. Biol. Chem.">
        <title>Topology and functional domains of the yeast pore membrane protein Pom152p.</title>
        <authorList>
            <person name="Tcheperegine S.E."/>
            <person name="Marelli M."/>
            <person name="Wozniak R.W."/>
        </authorList>
    </citation>
    <scope>FUNCTION</scope>
    <scope>TOPOLOGY</scope>
</reference>
<reference key="6">
    <citation type="journal article" date="2000" name="J. Cell Biol.">
        <title>The yeast nuclear pore complex: composition, architecture, and transport mechanism.</title>
        <authorList>
            <person name="Rout M.P."/>
            <person name="Aitchison J.D."/>
            <person name="Suprapto A."/>
            <person name="Hjertaas K."/>
            <person name="Zhao Y."/>
            <person name="Chait B.T."/>
        </authorList>
    </citation>
    <scope>FUNCTION</scope>
    <scope>IDENTIFICATION IN THE NUCLEAR PORE COMPLEX</scope>
    <scope>SUBCELLULAR LOCATION</scope>
</reference>
<reference key="7">
    <citation type="journal article" date="2001" name="J. Cell Biol.">
        <title>A link between the synthesis of nucleoporins and the biogenesis of the nuclear envelope.</title>
        <authorList>
            <person name="Marelli M."/>
            <person name="Lusk C.P."/>
            <person name="Chan H."/>
            <person name="Aitchison J.D."/>
            <person name="Wozniak R.W."/>
        </authorList>
    </citation>
    <scope>FUNCTION</scope>
    <scope>DE NOVO NPC ASSEMBLY</scope>
</reference>
<reference key="8">
    <citation type="journal article" date="2003" name="Dev. Cell">
        <title>Peering through the pore: nuclear pore complex structure, assembly, and function.</title>
        <authorList>
            <person name="Suntharalingam M."/>
            <person name="Wente S.R."/>
        </authorList>
    </citation>
    <scope>REVIEW</scope>
</reference>
<reference key="9">
    <citation type="journal article" date="2003" name="Nature">
        <title>Global analysis of protein expression in yeast.</title>
        <authorList>
            <person name="Ghaemmaghami S."/>
            <person name="Huh W.-K."/>
            <person name="Bower K."/>
            <person name="Howson R.W."/>
            <person name="Belle A."/>
            <person name="Dephoure N."/>
            <person name="O'Shea E.K."/>
            <person name="Weissman J.S."/>
        </authorList>
    </citation>
    <scope>LEVEL OF PROTEIN EXPRESSION [LARGE SCALE ANALYSIS]</scope>
</reference>
<reference key="10">
    <citation type="journal article" date="2003" name="Nature">
        <title>Targets of the cyclin-dependent kinase Cdk1.</title>
        <authorList>
            <person name="Ubersax J.A."/>
            <person name="Woodbury E.L."/>
            <person name="Quang P.N."/>
            <person name="Paraz M."/>
            <person name="Blethrow J.D."/>
            <person name="Shah K."/>
            <person name="Shokat K.M."/>
            <person name="Morgan D.O."/>
        </authorList>
    </citation>
    <scope>PHOSPHORYLATION BY CDC28</scope>
</reference>
<reference key="11">
    <citation type="journal article" date="2006" name="Proc. Natl. Acad. Sci. U.S.A.">
        <title>A global topology map of the Saccharomyces cerevisiae membrane proteome.</title>
        <authorList>
            <person name="Kim H."/>
            <person name="Melen K."/>
            <person name="Oesterberg M."/>
            <person name="von Heijne G."/>
        </authorList>
    </citation>
    <scope>TOPOLOGY [LARGE SCALE ANALYSIS]</scope>
    <source>
        <strain>ATCC 208353 / W303-1A</strain>
    </source>
</reference>
<reference key="12">
    <citation type="journal article" date="2007" name="J. Proteome Res.">
        <title>Large-scale phosphorylation analysis of alpha-factor-arrested Saccharomyces cerevisiae.</title>
        <authorList>
            <person name="Li X."/>
            <person name="Gerber S.A."/>
            <person name="Rudner A.D."/>
            <person name="Beausoleil S.A."/>
            <person name="Haas W."/>
            <person name="Villen J."/>
            <person name="Elias J.E."/>
            <person name="Gygi S.P."/>
        </authorList>
    </citation>
    <scope>PHOSPHORYLATION [LARGE SCALE ANALYSIS] AT SER-45</scope>
    <scope>IDENTIFICATION BY MASS SPECTROMETRY [LARGE SCALE ANALYSIS]</scope>
    <source>
        <strain>ADR376</strain>
    </source>
</reference>
<reference key="13">
    <citation type="journal article" date="2007" name="Proc. Natl. Acad. Sci. U.S.A.">
        <title>Analysis of phosphorylation sites on proteins from Saccharomyces cerevisiae by electron transfer dissociation (ETD) mass spectrometry.</title>
        <authorList>
            <person name="Chi A."/>
            <person name="Huttenhower C."/>
            <person name="Geer L.Y."/>
            <person name="Coon J.J."/>
            <person name="Syka J.E.P."/>
            <person name="Bai D.L."/>
            <person name="Shabanowitz J."/>
            <person name="Burke D.J."/>
            <person name="Troyanskaya O.G."/>
            <person name="Hunt D.F."/>
        </authorList>
    </citation>
    <scope>PHOSPHORYLATION [LARGE SCALE ANALYSIS] AT SER-60</scope>
    <scope>IDENTIFICATION BY MASS SPECTROMETRY [LARGE SCALE ANALYSIS]</scope>
</reference>
<reference key="14">
    <citation type="journal article" date="2008" name="Mol. Cell. Proteomics">
        <title>A multidimensional chromatography technology for in-depth phosphoproteome analysis.</title>
        <authorList>
            <person name="Albuquerque C.P."/>
            <person name="Smolka M.B."/>
            <person name="Payne S.H."/>
            <person name="Bafna V."/>
            <person name="Eng J."/>
            <person name="Zhou H."/>
        </authorList>
    </citation>
    <scope>IDENTIFICATION BY MASS SPECTROMETRY [LARGE SCALE ANALYSIS]</scope>
</reference>
<reference key="15">
    <citation type="journal article" date="2009" name="Science">
        <title>Global analysis of Cdk1 substrate phosphorylation sites provides insights into evolution.</title>
        <authorList>
            <person name="Holt L.J."/>
            <person name="Tuch B.B."/>
            <person name="Villen J."/>
            <person name="Johnson A.D."/>
            <person name="Gygi S.P."/>
            <person name="Morgan D.O."/>
        </authorList>
    </citation>
    <scope>PHOSPHORYLATION [LARGE SCALE ANALYSIS] AT SER-45</scope>
    <scope>IDENTIFICATION BY MASS SPECTROMETRY [LARGE SCALE ANALYSIS]</scope>
</reference>
<dbReference type="EMBL" id="Z31592">
    <property type="protein sequence ID" value="CAA83469.1"/>
    <property type="molecule type" value="Genomic_DNA"/>
</dbReference>
<dbReference type="EMBL" id="Z48622">
    <property type="protein sequence ID" value="CAA88554.1"/>
    <property type="molecule type" value="Genomic_DNA"/>
</dbReference>
<dbReference type="EMBL" id="BK006946">
    <property type="protein sequence ID" value="DAA10026.1"/>
    <property type="molecule type" value="Genomic_DNA"/>
</dbReference>
<dbReference type="PIR" id="A53824">
    <property type="entry name" value="A53824"/>
</dbReference>
<dbReference type="RefSeq" id="NP_013848.1">
    <property type="nucleotide sequence ID" value="NM_001182630.1"/>
</dbReference>
<dbReference type="PDB" id="5TVZ">
    <property type="method" value="NMR"/>
    <property type="chains" value="A=718-820"/>
</dbReference>
<dbReference type="PDB" id="8T9L">
    <property type="method" value="EM"/>
    <property type="resolution" value="7.00 A"/>
    <property type="chains" value="B/D=1-1337"/>
</dbReference>
<dbReference type="PDBsum" id="5TVZ"/>
<dbReference type="PDBsum" id="8T9L"/>
<dbReference type="EMDB" id="EMD-41117"/>
<dbReference type="SASBDB" id="P39685"/>
<dbReference type="SMR" id="P39685"/>
<dbReference type="BioGRID" id="35306">
    <property type="interactions" value="163"/>
</dbReference>
<dbReference type="ComplexPortal" id="CPX-824">
    <property type="entry name" value="Nuclear pore complex"/>
</dbReference>
<dbReference type="DIP" id="DIP-1520N"/>
<dbReference type="FunCoup" id="P39685">
    <property type="interactions" value="145"/>
</dbReference>
<dbReference type="IntAct" id="P39685">
    <property type="interactions" value="24"/>
</dbReference>
<dbReference type="MINT" id="P39685"/>
<dbReference type="STRING" id="4932.YMR129W"/>
<dbReference type="TCDB" id="1.I.1.1.1">
    <property type="family name" value="the nuclear pore complex (npc) family"/>
</dbReference>
<dbReference type="GlyCosmos" id="P39685">
    <property type="glycosylation" value="1 site, No reported glycans"/>
</dbReference>
<dbReference type="GlyGen" id="P39685">
    <property type="glycosylation" value="1 site"/>
</dbReference>
<dbReference type="iPTMnet" id="P39685"/>
<dbReference type="PaxDb" id="4932-YMR129W"/>
<dbReference type="PeptideAtlas" id="P39685"/>
<dbReference type="DNASU" id="855159"/>
<dbReference type="EnsemblFungi" id="YMR129W_mRNA">
    <property type="protein sequence ID" value="YMR129W"/>
    <property type="gene ID" value="YMR129W"/>
</dbReference>
<dbReference type="GeneID" id="855159"/>
<dbReference type="KEGG" id="sce:YMR129W"/>
<dbReference type="AGR" id="SGD:S000004736"/>
<dbReference type="SGD" id="S000004736">
    <property type="gene designation" value="POM152"/>
</dbReference>
<dbReference type="VEuPathDB" id="FungiDB:YMR129W"/>
<dbReference type="eggNOG" id="ENOG502QQ5B">
    <property type="taxonomic scope" value="Eukaryota"/>
</dbReference>
<dbReference type="HOGENOM" id="CLU_002415_0_0_1"/>
<dbReference type="InParanoid" id="P39685"/>
<dbReference type="OMA" id="DRSNCKR"/>
<dbReference type="OrthoDB" id="5529162at2759"/>
<dbReference type="BioCyc" id="YEAST:G3O-32822-MONOMER"/>
<dbReference type="BioGRID-ORCS" id="855159">
    <property type="hits" value="1 hit in 10 CRISPR screens"/>
</dbReference>
<dbReference type="PRO" id="PR:P39685"/>
<dbReference type="Proteomes" id="UP000002311">
    <property type="component" value="Chromosome XIII"/>
</dbReference>
<dbReference type="RNAct" id="P39685">
    <property type="molecule type" value="protein"/>
</dbReference>
<dbReference type="GO" id="GO:0071944">
    <property type="term" value="C:cell periphery"/>
    <property type="evidence" value="ECO:0007005"/>
    <property type="project" value="SGD"/>
</dbReference>
<dbReference type="GO" id="GO:0005739">
    <property type="term" value="C:mitochondrion"/>
    <property type="evidence" value="ECO:0007005"/>
    <property type="project" value="SGD"/>
</dbReference>
<dbReference type="GO" id="GO:0005635">
    <property type="term" value="C:nuclear envelope"/>
    <property type="evidence" value="ECO:0000303"/>
    <property type="project" value="ComplexPortal"/>
</dbReference>
<dbReference type="GO" id="GO:0005641">
    <property type="term" value="C:nuclear envelope lumen"/>
    <property type="evidence" value="ECO:0000314"/>
    <property type="project" value="SGD"/>
</dbReference>
<dbReference type="GO" id="GO:0031965">
    <property type="term" value="C:nuclear membrane"/>
    <property type="evidence" value="ECO:0007669"/>
    <property type="project" value="UniProtKB-SubCell"/>
</dbReference>
<dbReference type="GO" id="GO:0034399">
    <property type="term" value="C:nuclear periphery"/>
    <property type="evidence" value="ECO:0007005"/>
    <property type="project" value="SGD"/>
</dbReference>
<dbReference type="GO" id="GO:0005643">
    <property type="term" value="C:nuclear pore"/>
    <property type="evidence" value="ECO:0000314"/>
    <property type="project" value="SGD"/>
</dbReference>
<dbReference type="GO" id="GO:0070762">
    <property type="term" value="C:nuclear pore transmembrane ring"/>
    <property type="evidence" value="ECO:0000314"/>
    <property type="project" value="SGD"/>
</dbReference>
<dbReference type="GO" id="GO:0043495">
    <property type="term" value="F:protein-membrane adaptor activity"/>
    <property type="evidence" value="ECO:0000314"/>
    <property type="project" value="SGD"/>
</dbReference>
<dbReference type="GO" id="GO:0017056">
    <property type="term" value="F:structural constituent of nuclear pore"/>
    <property type="evidence" value="ECO:0000316"/>
    <property type="project" value="SGD"/>
</dbReference>
<dbReference type="GO" id="GO:0051028">
    <property type="term" value="P:mRNA transport"/>
    <property type="evidence" value="ECO:0007669"/>
    <property type="project" value="UniProtKB-KW"/>
</dbReference>
<dbReference type="GO" id="GO:0006999">
    <property type="term" value="P:nuclear pore organization"/>
    <property type="evidence" value="ECO:0000316"/>
    <property type="project" value="SGD"/>
</dbReference>
<dbReference type="GO" id="GO:0006913">
    <property type="term" value="P:nucleocytoplasmic transport"/>
    <property type="evidence" value="ECO:0000303"/>
    <property type="project" value="ComplexPortal"/>
</dbReference>
<dbReference type="GO" id="GO:0006606">
    <property type="term" value="P:protein import into nucleus"/>
    <property type="evidence" value="ECO:0000314"/>
    <property type="project" value="SGD"/>
</dbReference>
<dbReference type="GO" id="GO:0030474">
    <property type="term" value="P:spindle pole body duplication"/>
    <property type="evidence" value="ECO:0000316"/>
    <property type="project" value="SGD"/>
</dbReference>
<dbReference type="InterPro" id="IPR056541">
    <property type="entry name" value="Ig-like_POM152"/>
</dbReference>
<dbReference type="InterPro" id="IPR056542">
    <property type="entry name" value="Ig-like_POM152_1st"/>
</dbReference>
<dbReference type="InterPro" id="IPR056543">
    <property type="entry name" value="Ig-like_POM152_9th"/>
</dbReference>
<dbReference type="InterPro" id="IPR056544">
    <property type="entry name" value="Ig_POM152"/>
</dbReference>
<dbReference type="InterPro" id="IPR037701">
    <property type="entry name" value="Pom152"/>
</dbReference>
<dbReference type="InterPro" id="IPR056540">
    <property type="entry name" value="TMD_POM152"/>
</dbReference>
<dbReference type="PANTHER" id="PTHR28206">
    <property type="entry name" value="NUCLEOPORIN POM152"/>
    <property type="match status" value="1"/>
</dbReference>
<dbReference type="PANTHER" id="PTHR28206:SF1">
    <property type="entry name" value="NUCLEOPORIN POM152"/>
    <property type="match status" value="1"/>
</dbReference>
<dbReference type="Pfam" id="PF24312">
    <property type="entry name" value="Ig-like_POM152"/>
    <property type="match status" value="1"/>
</dbReference>
<dbReference type="Pfam" id="PF24519">
    <property type="entry name" value="Ig-like_Pom152_1"/>
    <property type="match status" value="1"/>
</dbReference>
<dbReference type="Pfam" id="PF24527">
    <property type="entry name" value="Ig-like_Pom152_9"/>
    <property type="match status" value="1"/>
</dbReference>
<dbReference type="Pfam" id="PF23664">
    <property type="entry name" value="Ig_Pom152"/>
    <property type="match status" value="2"/>
</dbReference>
<dbReference type="Pfam" id="PF24097">
    <property type="entry name" value="TMD_POM152"/>
    <property type="match status" value="1"/>
</dbReference>
<gene>
    <name type="primary">POM152</name>
    <name type="ordered locus">YMR129W</name>
    <name type="ORF">YM9553.05</name>
</gene>
<accession>P39685</accession>
<accession>D6VZV2</accession>
<organism>
    <name type="scientific">Saccharomyces cerevisiae (strain ATCC 204508 / S288c)</name>
    <name type="common">Baker's yeast</name>
    <dbReference type="NCBI Taxonomy" id="559292"/>
    <lineage>
        <taxon>Eukaryota</taxon>
        <taxon>Fungi</taxon>
        <taxon>Dikarya</taxon>
        <taxon>Ascomycota</taxon>
        <taxon>Saccharomycotina</taxon>
        <taxon>Saccharomycetes</taxon>
        <taxon>Saccharomycetales</taxon>
        <taxon>Saccharomycetaceae</taxon>
        <taxon>Saccharomyces</taxon>
    </lineage>
</organism>
<name>PO152_YEAST</name>
<protein>
    <recommendedName>
        <fullName>Nucleoporin POM152</fullName>
    </recommendedName>
    <alternativeName>
        <fullName>Nuclear pore protein POM152</fullName>
    </alternativeName>
    <alternativeName>
        <fullName>P150</fullName>
    </alternativeName>
    <alternativeName>
        <fullName>Pore membrane protein POM152</fullName>
    </alternativeName>
</protein>
<comment type="function">
    <text evidence="3 4 9 10">Functions as a component of the nuclear pore complex (NPC). NPC components, collectively referred to as nucleoporins (NUPs), can play the role of both NPC structural components and of docking or interaction partners for transiently associated nuclear transport factors. POM152 is important for the de novo assembly of NPCs.</text>
</comment>
<comment type="subunit">
    <text evidence="3 9">Component of the nuclear pore complex (NPC). NPC constitutes the exclusive means of nucleocytoplasmic transport. NPCs allow the passive diffusion of ions and small molecules and the active, nuclear transport receptor-mediated bidirectional transport of macromolecules such as proteins, RNAs, ribonucleoparticles (RNPs), and ribosomal subunits across the nuclear envelope. Due to its 8-fold rotational symmetry, all subunits are present with 8 copies or multiples thereof. Interacts with NUP188.</text>
</comment>
<comment type="subcellular location">
    <subcellularLocation>
        <location evidence="3">Nucleus</location>
        <location evidence="3">Nuclear pore complex</location>
    </subcellularLocation>
    <subcellularLocation>
        <location>Nucleus membrane</location>
        <topology>Multi-pass membrane protein</topology>
    </subcellularLocation>
    <text>Central core structure of the nuclear pore complex.</text>
</comment>
<comment type="PTM">
    <text>The N-terminus is blocked.</text>
</comment>
<comment type="PTM">
    <text evidence="6">Phosphorylated by CDC28.</text>
</comment>
<comment type="miscellaneous">
    <text evidence="5">Present with 3410 molecules/cell in log phase SD medium.</text>
</comment>
<sequence>MEHRYNVFNDTPRGNHWMGSSVSGSPRPSYSSRPNVNTTRRFQYSDDEPAEKIRPLRSRSFKSTESNISDEKSRISERDSKDRYINGDKKVDIYSLPLISTDVLEISKQRTFAVILFLIIQCYKIYDLVILKSGLPLSGLLFKNYRFNFISKYFIIDSFFLYVLPSFNIPRLTFKPWVVYLQILAMLLLNIFISSDHEFVLISLIMTTWRKLYTKELSVTGSAINHHRIFDSSAHFKGALTIKILPENTAMFNPLHESYCLPMDTNLFKINSIDVPIRINSTEEIEYIELEYRDLYTNSVELRSLSKKDFKIIDNPKSFLKKDQSVLKSHSNDFEEGSTIRYLAVTLQDIGFYQIKKIVDSKKLNLKIHQSHLVVPYCPIASITGTGSNDRCIGDSDNVSFEIQGVPPMKLAYSKIVNGQTFSYVDSSLQPEYFESPLQSSKSKQSFTQGELNDLKWGRNQPVNINLDSSITQDGKFAYKIDKITDGLGNVVDFTSLPEELKKRYDLSYNFNVHEVPRAALEERFDPKSPTKRSIAIVFEEIKNWISDIPYVISLSYTDAQDKSKKIMNVTTDSLTKVLQADLPGSYNLEYIESKFCPGEIVGKSNVLVTMPVAPTMEVKSFPILDQCVGQVGLNFELSFTGAPPYYYNTKIYKLENGERKLYDAKRYTSEGTRNRFSYSPPKEGNYEIVFDTVSNKLFTEPIKLEPVKEYTFKTSMRVKPSASLKLHHDLKLCLGDHSSVPVALKGQGPFTLTYDIIETFSSKRKTFEIKEIKTNEYVIKTPVFTTGGDYILSLVSIKDSTGCVVGLSQPDAKIQVRRDIPSAAFNFFEPIKEAKIKHGSVTEIPLKLSGEGPFTVKFKHMDYDGNIVKEFENKFQNSYKPALKVSKEGLYQLVDIRDSSCQGNVIYRNSLYKVSFLEKPKFAIQDNHHITKVTENLFSKEEVCQGMEGTVDLALFGSPPFILEYDLMAPNGHISTKKIQVATKYASLKLPNQIPGEYITTIKAIFDGNYGESDIHFREHQSELIIKQTVHPIPDVAFADGGKTLRACAANVDQISFLEPINLKFLQGESPFSITFSVYHESTSRTDQYTIDNIDSENFSFEKLYEGMKLGNHAITIDSVVDANGCVNSLISGPRNQILVSITDAPKIHILDPSTEYCVGDYVAYQLNGVAPFMIKYEFNGIPLKSKERSSQFVRLASEPGIISITSLQDSSSQCIVDFTNPKLKSEFDDLSLNIHPIPSVTVSQGNYVTEDIREGDQAEVIFSFEGTPPFSLTYVRTEETDGKHGKRRSQVVETHKVTDIYSHEYKVITSLQGTYEAIEITDAYCFAKNDLFFNN</sequence>
<proteinExistence type="evidence at protein level"/>